<comment type="function">
    <text evidence="1 2 3 5">Alpha subunit of the heteropentameric ligand-gated chloride channel gated by gamma-aminobutyric acid (GABA), a major inhibitory neurotransmitter in the brain. GABA-gated chloride channels, also named GABA(A) receptors (GABAAR), consist of five subunits arranged around a central pore and contain GABA active binding site(s) located at the alpha and beta subunit interface(s) (PubMed:3037384). When activated by GABA, GABAARs selectively allow the flow of chloride anions across the cell membrane down their electrochemical gradient (PubMed:3037384). Alpha-1/GABRA1-containing GABAARs are largely synaptic (By similarity). Chloride influx into the postsynaptic neuron following GABAAR opening decreases the neuron ability to generate a new action potential, thereby reducing nerve transmission (PubMed:3037384). GABAARs containing alpha-1 and beta-2 or -3 subunits exhibit synaptogenic activity; the gamma-2 subunit being necessary but not sufficient to induce rapid synaptic contacts formation (By similarity). GABAARs function also as histamine receptor where histamine binds at the interface of two neighboring beta subunits and potentiates GABA response (By similarity). GABAARs containing alpha, beta and epsilon subunits also permit spontaneous chloride channel activity while preserving the structural information required for GABA-gated openings (By similarity). Alpha-1-mediated plasticity in the orbitofrontal cortex regulates context-dependent action selection (By similarity). Together with rho subunits, may also control neuronal and glial GABAergic transmission in the cerebellum (By similarity).</text>
</comment>
<comment type="catalytic activity">
    <reaction evidence="5">
        <text>chloride(in) = chloride(out)</text>
        <dbReference type="Rhea" id="RHEA:29823"/>
        <dbReference type="ChEBI" id="CHEBI:17996"/>
    </reaction>
</comment>
<comment type="activity regulation">
    <text evidence="1 3">Allosterically activated by benzodiazepines, the neuroanesthetic alphaxalone and pentobarbital (By similarity). Inhibited by the antagonist bicuculline (By similarity). Potentiated by histamine (By similarity).</text>
</comment>
<comment type="subunit">
    <text evidence="1 2 3 5">Heteropentamer, formed by a combination of alpha (GABRA1-6), beta (GABRB1-3), gamma (GABRG1-3), delta (GABRD), epsilon (GABRE), rho (GABRR1-3), pi (GABRP) and theta (GABRQ) subunits, each subunit exhibiting distinct physiological and pharmacological properties (PubMed:3037384). Interacts with UBQLN1 (By similarity). Interacts with TRAK1 (By similarity). Interacts with KIF21B (By similarity). Identified in a complex of 720 kDa composed of LHFPL4, NLGN2, GABRA1, GABRB2, GABRG2 and GABRB3 (By similarity). Interacts with LHFPL4 (By similarity). Interacts with NLGN2 (By similarity). Interacts with SHISA7; interaction leads to the regulation of GABA(A) receptor trafficking, channel deactivation kinetics and pharmacology (By similarity).</text>
</comment>
<comment type="subcellular location">
    <subcellularLocation>
        <location evidence="7">Postsynaptic cell membrane</location>
        <topology evidence="1">Multi-pass membrane protein</topology>
    </subcellularLocation>
    <subcellularLocation>
        <location evidence="5">Cell membrane</location>
        <topology evidence="1">Multi-pass membrane protein</topology>
    </subcellularLocation>
    <subcellularLocation>
        <location evidence="3">Cytoplasmic vesicle membrane</location>
    </subcellularLocation>
</comment>
<comment type="tissue specificity">
    <text>Cerebellar granule cells, Purkinje cells and stellate/basket cells.</text>
</comment>
<comment type="domain">
    <text evidence="2">The extracellular domain contributes to synaptic contact formation.</text>
</comment>
<comment type="domain">
    <text evidence="1">The GABA-binding pockets are located at the interface between neighboring alpha and beta subunits.</text>
</comment>
<comment type="domain">
    <text evidence="1">GABAARs subunits share a common topological structure: a peptide sequence made up of a long extracellular N-terminal, four transmembrane domains, intracellular or cytoplasmic domain located between the third and the fourth transmembrane domains.</text>
</comment>
<comment type="similarity">
    <text evidence="6">Belongs to the ligand-gated ion channel (TC 1.A.9) family. Gamma-aminobutyric acid receptor (TC 1.A.9.5) subfamily. GABRA1 sub-subfamily.</text>
</comment>
<dbReference type="EMBL" id="X05717">
    <property type="protein sequence ID" value="CAA29189.1"/>
    <property type="molecule type" value="mRNA"/>
</dbReference>
<dbReference type="EMBL" id="BC114156">
    <property type="protein sequence ID" value="AAI14157.1"/>
    <property type="molecule type" value="mRNA"/>
</dbReference>
<dbReference type="PIR" id="A27142">
    <property type="entry name" value="A27142"/>
</dbReference>
<dbReference type="RefSeq" id="NP_001178048.1">
    <property type="nucleotide sequence ID" value="NM_001191119.3"/>
</dbReference>
<dbReference type="RefSeq" id="XP_010805879.1">
    <property type="nucleotide sequence ID" value="XM_010807577.4"/>
</dbReference>
<dbReference type="EMDB" id="EMD-0275"/>
<dbReference type="SMR" id="P08219"/>
<dbReference type="FunCoup" id="P08219">
    <property type="interactions" value="715"/>
</dbReference>
<dbReference type="STRING" id="9913.ENSBTAP00000009483"/>
<dbReference type="BindingDB" id="P08219"/>
<dbReference type="ChEMBL" id="CHEMBL4680049"/>
<dbReference type="DrugCentral" id="P08219"/>
<dbReference type="GlyCosmos" id="P08219">
    <property type="glycosylation" value="2 sites, No reported glycans"/>
</dbReference>
<dbReference type="GlyGen" id="P08219">
    <property type="glycosylation" value="2 sites"/>
</dbReference>
<dbReference type="PaxDb" id="9913-ENSBTAP00000009483"/>
<dbReference type="Ensembl" id="ENSBTAT00000009483.7">
    <property type="protein sequence ID" value="ENSBTAP00000009483.5"/>
    <property type="gene ID" value="ENSBTAG00000030286.5"/>
</dbReference>
<dbReference type="GeneID" id="780973"/>
<dbReference type="KEGG" id="bta:780973"/>
<dbReference type="CTD" id="2554"/>
<dbReference type="VEuPathDB" id="HostDB:ENSBTAG00000030286"/>
<dbReference type="VGNC" id="VGNC:29191">
    <property type="gene designation" value="GABRA1"/>
</dbReference>
<dbReference type="eggNOG" id="KOG3642">
    <property type="taxonomic scope" value="Eukaryota"/>
</dbReference>
<dbReference type="GeneTree" id="ENSGT00940000159136"/>
<dbReference type="HOGENOM" id="CLU_010920_2_1_1"/>
<dbReference type="InParanoid" id="P08219"/>
<dbReference type="OMA" id="YLWAYLF"/>
<dbReference type="OrthoDB" id="203862at2759"/>
<dbReference type="TreeFam" id="TF315453"/>
<dbReference type="Reactome" id="R-BTA-977443">
    <property type="pathway name" value="GABA receptor activation"/>
</dbReference>
<dbReference type="PRO" id="PR:P08219"/>
<dbReference type="Proteomes" id="UP000009136">
    <property type="component" value="Chromosome 7"/>
</dbReference>
<dbReference type="Bgee" id="ENSBTAG00000030286">
    <property type="expression patterns" value="Expressed in occipital lobe and 50 other cell types or tissues"/>
</dbReference>
<dbReference type="GO" id="GO:0034707">
    <property type="term" value="C:chloride channel complex"/>
    <property type="evidence" value="ECO:0007669"/>
    <property type="project" value="UniProtKB-KW"/>
</dbReference>
<dbReference type="GO" id="GO:0030659">
    <property type="term" value="C:cytoplasmic vesicle membrane"/>
    <property type="evidence" value="ECO:0007669"/>
    <property type="project" value="UniProtKB-SubCell"/>
</dbReference>
<dbReference type="GO" id="GO:0032590">
    <property type="term" value="C:dendrite membrane"/>
    <property type="evidence" value="ECO:0000318"/>
    <property type="project" value="GO_Central"/>
</dbReference>
<dbReference type="GO" id="GO:1902711">
    <property type="term" value="C:GABA-A receptor complex"/>
    <property type="evidence" value="ECO:0000250"/>
    <property type="project" value="UniProtKB"/>
</dbReference>
<dbReference type="GO" id="GO:0098794">
    <property type="term" value="C:postsynapse"/>
    <property type="evidence" value="ECO:0000318"/>
    <property type="project" value="GO_Central"/>
</dbReference>
<dbReference type="GO" id="GO:0099634">
    <property type="term" value="C:postsynaptic specialization membrane"/>
    <property type="evidence" value="ECO:0000250"/>
    <property type="project" value="UniProtKB"/>
</dbReference>
<dbReference type="GO" id="GO:0004890">
    <property type="term" value="F:GABA-A receptor activity"/>
    <property type="evidence" value="ECO:0000250"/>
    <property type="project" value="UniProtKB"/>
</dbReference>
<dbReference type="GO" id="GO:0022851">
    <property type="term" value="F:GABA-gated chloride ion channel activity"/>
    <property type="evidence" value="ECO:0000250"/>
    <property type="project" value="UniProtKB"/>
</dbReference>
<dbReference type="GO" id="GO:1902476">
    <property type="term" value="P:chloride transmembrane transport"/>
    <property type="evidence" value="ECO:0000318"/>
    <property type="project" value="GO_Central"/>
</dbReference>
<dbReference type="GO" id="GO:0007214">
    <property type="term" value="P:gamma-aminobutyric acid signaling pathway"/>
    <property type="evidence" value="ECO:0000318"/>
    <property type="project" value="GO_Central"/>
</dbReference>
<dbReference type="GO" id="GO:1904862">
    <property type="term" value="P:inhibitory synapse assembly"/>
    <property type="evidence" value="ECO:0000250"/>
    <property type="project" value="UniProtKB"/>
</dbReference>
<dbReference type="GO" id="GO:0051932">
    <property type="term" value="P:synaptic transmission, GABAergic"/>
    <property type="evidence" value="ECO:0000318"/>
    <property type="project" value="GO_Central"/>
</dbReference>
<dbReference type="CDD" id="cd19034">
    <property type="entry name" value="LGIC_ECD_GABAAR_A1"/>
    <property type="match status" value="1"/>
</dbReference>
<dbReference type="CDD" id="cd19052">
    <property type="entry name" value="LGIC_TM_GABAAR_alpha"/>
    <property type="match status" value="1"/>
</dbReference>
<dbReference type="FunFam" id="2.70.170.10:FF:000001">
    <property type="entry name" value="Gamma-aminobutyric acid A receptor subunit alpha-2"/>
    <property type="match status" value="1"/>
</dbReference>
<dbReference type="FunFam" id="1.20.58.390:FF:000002">
    <property type="entry name" value="Putative gamma-aminobutyric acid receptor subunit alpha-5"/>
    <property type="match status" value="1"/>
</dbReference>
<dbReference type="Gene3D" id="2.70.170.10">
    <property type="entry name" value="Neurotransmitter-gated ion-channel ligand-binding domain"/>
    <property type="match status" value="1"/>
</dbReference>
<dbReference type="Gene3D" id="1.20.58.390">
    <property type="entry name" value="Neurotransmitter-gated ion-channel transmembrane domain"/>
    <property type="match status" value="1"/>
</dbReference>
<dbReference type="InterPro" id="IPR006028">
    <property type="entry name" value="GABAA/Glycine_rcpt"/>
</dbReference>
<dbReference type="InterPro" id="IPR001390">
    <property type="entry name" value="GABAAa_rcpt"/>
</dbReference>
<dbReference type="InterPro" id="IPR005431">
    <property type="entry name" value="GABBAa1_rcpt"/>
</dbReference>
<dbReference type="InterPro" id="IPR047024">
    <property type="entry name" value="Gabra-1-6_TM"/>
</dbReference>
<dbReference type="InterPro" id="IPR047079">
    <property type="entry name" value="GABRA1_ECD"/>
</dbReference>
<dbReference type="InterPro" id="IPR006202">
    <property type="entry name" value="Neur_chan_lig-bd"/>
</dbReference>
<dbReference type="InterPro" id="IPR036734">
    <property type="entry name" value="Neur_chan_lig-bd_sf"/>
</dbReference>
<dbReference type="InterPro" id="IPR006201">
    <property type="entry name" value="Neur_channel"/>
</dbReference>
<dbReference type="InterPro" id="IPR036719">
    <property type="entry name" value="Neuro-gated_channel_TM_sf"/>
</dbReference>
<dbReference type="InterPro" id="IPR038050">
    <property type="entry name" value="Neuro_actylchol_rec"/>
</dbReference>
<dbReference type="InterPro" id="IPR006029">
    <property type="entry name" value="Neurotrans-gated_channel_TM"/>
</dbReference>
<dbReference type="InterPro" id="IPR018000">
    <property type="entry name" value="Neurotransmitter_ion_chnl_CS"/>
</dbReference>
<dbReference type="NCBIfam" id="TIGR00860">
    <property type="entry name" value="LIC"/>
    <property type="match status" value="1"/>
</dbReference>
<dbReference type="PANTHER" id="PTHR18945">
    <property type="entry name" value="NEUROTRANSMITTER GATED ION CHANNEL"/>
    <property type="match status" value="1"/>
</dbReference>
<dbReference type="Pfam" id="PF02931">
    <property type="entry name" value="Neur_chan_LBD"/>
    <property type="match status" value="1"/>
</dbReference>
<dbReference type="Pfam" id="PF02932">
    <property type="entry name" value="Neur_chan_memb"/>
    <property type="match status" value="2"/>
</dbReference>
<dbReference type="PRINTS" id="PR01079">
    <property type="entry name" value="GABAARALPHA"/>
</dbReference>
<dbReference type="PRINTS" id="PR01614">
    <property type="entry name" value="GABAARALPHA1"/>
</dbReference>
<dbReference type="PRINTS" id="PR00253">
    <property type="entry name" value="GABAARECEPTR"/>
</dbReference>
<dbReference type="PRINTS" id="PR00252">
    <property type="entry name" value="NRIONCHANNEL"/>
</dbReference>
<dbReference type="SUPFAM" id="SSF90112">
    <property type="entry name" value="Neurotransmitter-gated ion-channel transmembrane pore"/>
    <property type="match status" value="1"/>
</dbReference>
<dbReference type="SUPFAM" id="SSF63712">
    <property type="entry name" value="Nicotinic receptor ligand binding domain-like"/>
    <property type="match status" value="1"/>
</dbReference>
<dbReference type="PROSITE" id="PS00236">
    <property type="entry name" value="NEUROTR_ION_CHANNEL"/>
    <property type="match status" value="1"/>
</dbReference>
<feature type="signal peptide" evidence="4">
    <location>
        <begin position="1"/>
        <end position="27"/>
    </location>
</feature>
<feature type="chain" id="PRO_0000000427" description="Gamma-aminobutyric acid receptor subunit alpha-1">
    <location>
        <begin position="28"/>
        <end position="456"/>
    </location>
</feature>
<feature type="topological domain" description="Extracellular" evidence="6">
    <location>
        <begin position="28"/>
        <end position="253"/>
    </location>
</feature>
<feature type="transmembrane region" description="Helical" evidence="1">
    <location>
        <begin position="254"/>
        <end position="274"/>
    </location>
</feature>
<feature type="topological domain" description="Cytoplasmic" evidence="6">
    <location>
        <begin position="275"/>
        <end position="279"/>
    </location>
</feature>
<feature type="transmembrane region" description="Helical" evidence="1">
    <location>
        <begin position="280"/>
        <end position="301"/>
    </location>
</feature>
<feature type="topological domain" description="Extracellular" evidence="6">
    <location>
        <begin position="302"/>
        <end position="311"/>
    </location>
</feature>
<feature type="transmembrane region" description="Helical" evidence="1">
    <location>
        <begin position="312"/>
        <end position="333"/>
    </location>
</feature>
<feature type="topological domain" description="Cytoplasmic" evidence="6">
    <location>
        <begin position="334"/>
        <end position="421"/>
    </location>
</feature>
<feature type="transmembrane region" description="Helical" evidence="1">
    <location>
        <begin position="422"/>
        <end position="441"/>
    </location>
</feature>
<feature type="topological domain" description="Extracellular" evidence="6">
    <location>
        <begin position="442"/>
        <end position="456"/>
    </location>
</feature>
<feature type="binding site" evidence="1 3">
    <location>
        <position position="94"/>
    </location>
    <ligand>
        <name>4-aminobutanoate</name>
        <dbReference type="ChEBI" id="CHEBI:59888"/>
        <note>ligand shared with the neighboring beta subunit</note>
    </ligand>
</feature>
<feature type="binding site" evidence="3">
    <location>
        <position position="157"/>
    </location>
    <ligand>
        <name>4-aminobutanoate</name>
        <dbReference type="ChEBI" id="CHEBI:59888"/>
        <note>ligand shared with the neighboring beta subunit</note>
    </ligand>
</feature>
<feature type="glycosylation site" description="N-linked (GlcNAc...) asparagine" evidence="4">
    <location>
        <position position="38"/>
    </location>
</feature>
<feature type="glycosylation site" description="N-linked (GlcNAc...) asparagine" evidence="4">
    <location>
        <position position="138"/>
    </location>
</feature>
<feature type="disulfide bond" evidence="1">
    <location>
        <begin position="166"/>
        <end position="180"/>
    </location>
</feature>
<proteinExistence type="evidence at protein level"/>
<keyword id="KW-1003">Cell membrane</keyword>
<keyword id="KW-0868">Chloride</keyword>
<keyword id="KW-0869">Chloride channel</keyword>
<keyword id="KW-0968">Cytoplasmic vesicle</keyword>
<keyword id="KW-0903">Direct protein sequencing</keyword>
<keyword id="KW-1015">Disulfide bond</keyword>
<keyword id="KW-0325">Glycoprotein</keyword>
<keyword id="KW-0407">Ion channel</keyword>
<keyword id="KW-0406">Ion transport</keyword>
<keyword id="KW-1071">Ligand-gated ion channel</keyword>
<keyword id="KW-0472">Membrane</keyword>
<keyword id="KW-0628">Postsynaptic cell membrane</keyword>
<keyword id="KW-0675">Receptor</keyword>
<keyword id="KW-1185">Reference proteome</keyword>
<keyword id="KW-0732">Signal</keyword>
<keyword id="KW-0770">Synapse</keyword>
<keyword id="KW-0812">Transmembrane</keyword>
<keyword id="KW-1133">Transmembrane helix</keyword>
<keyword id="KW-0813">Transport</keyword>
<name>GBRA1_BOVIN</name>
<accession>P08219</accession>
<accession>Q29RI5</accession>
<reference key="1">
    <citation type="journal article" date="1987" name="Nature">
        <title>Sequence and functional expression of the GABA A receptor shows a ligand-gated receptor super-family.</title>
        <authorList>
            <person name="Schofield P.R."/>
            <person name="Darlison M.G."/>
            <person name="Fujita N."/>
            <person name="Burt D.R."/>
            <person name="Stephenson F.A."/>
            <person name="Rodriguez H."/>
            <person name="Rhee L.M."/>
            <person name="Ramachandran J."/>
            <person name="Reale V."/>
            <person name="Glencorse T.A."/>
            <person name="Seeburg P.H."/>
            <person name="Barnard E.A."/>
        </authorList>
    </citation>
    <scope>NUCLEOTIDE SEQUENCE [MRNA]</scope>
    <scope>PARTIAL PROTEIN SEQUENCE</scope>
    <scope>FUNCTION</scope>
    <scope>SUBCELLULAR LOCATION</scope>
    <scope>SUBUNIT</scope>
    <scope>TRANSPORTER ACTIVITY</scope>
    <source>
        <tissue>Brain</tissue>
    </source>
</reference>
<reference key="2">
    <citation type="submission" date="2006-02" db="EMBL/GenBank/DDBJ databases">
        <authorList>
            <consortium name="NIH - Mammalian Gene Collection (MGC) project"/>
        </authorList>
    </citation>
    <scope>NUCLEOTIDE SEQUENCE [LARGE SCALE MRNA]</scope>
    <source>
        <strain>Hereford</strain>
        <tissue>Hypothalamus</tissue>
    </source>
</reference>
<reference key="3">
    <citation type="journal article" date="1989" name="Biochem. J.">
        <title>Mapping the benzodiazepine photoaffinity-labelling site with sequence-specific gamma-aminobutyric acidA-receptor antibodies.</title>
        <authorList>
            <person name="Stephenson F.A."/>
            <person name="Duggan M.J."/>
        </authorList>
    </citation>
    <scope>PROTEIN SEQUENCE OF 28-42; 351-367 AND 440-456</scope>
</reference>
<organism>
    <name type="scientific">Bos taurus</name>
    <name type="common">Bovine</name>
    <dbReference type="NCBI Taxonomy" id="9913"/>
    <lineage>
        <taxon>Eukaryota</taxon>
        <taxon>Metazoa</taxon>
        <taxon>Chordata</taxon>
        <taxon>Craniata</taxon>
        <taxon>Vertebrata</taxon>
        <taxon>Euteleostomi</taxon>
        <taxon>Mammalia</taxon>
        <taxon>Eutheria</taxon>
        <taxon>Laurasiatheria</taxon>
        <taxon>Artiodactyla</taxon>
        <taxon>Ruminantia</taxon>
        <taxon>Pecora</taxon>
        <taxon>Bovidae</taxon>
        <taxon>Bovinae</taxon>
        <taxon>Bos</taxon>
    </lineage>
</organism>
<sequence>MKKSPGLSDYLWAWTLFLSTLTGRSYGQPSLQDELKDNTTVFTRILDRLLDGYDNRLRPGLGERVTEVKTDIFVTSFGPVSDHDMEYTIDVFFRQSWKDERLKFKGPMTVLRLNNLMASKIWTPDTFFHNGKKSVAHNMTMPNKLLRITEDGTLLYTMRLTVRAECPMHLEDFPMDAHACPLKFGSYAYTRAEVVYEWTREPARSVVVAEDGSRLNQYDLLGQTVDSGIVQSSTGEYVVMTTHFHLKRKIGYFVIQTYLPCIMTVILSQVSFWLNRESVPARTVFGVTTVLTMTTLSISARNSLPKVAYATAMDWFIAVCYAFVFSALIEFATVNYFTKRGYAWDGKSVVPEKPKKVKDPLIKKNNTYAPTATSYTPNLARGDPGLATIAKSATIEPKEVKPETKPPEPKKTFNSVSKIDRLSRIAFPLLFGIFNLVYWATYLNREPQLKAPTPHQ</sequence>
<evidence type="ECO:0000250" key="1">
    <source>
        <dbReference type="UniProtKB" id="P14867"/>
    </source>
</evidence>
<evidence type="ECO:0000250" key="2">
    <source>
        <dbReference type="UniProtKB" id="P62812"/>
    </source>
</evidence>
<evidence type="ECO:0000250" key="3">
    <source>
        <dbReference type="UniProtKB" id="P62813"/>
    </source>
</evidence>
<evidence type="ECO:0000255" key="4"/>
<evidence type="ECO:0000269" key="5">
    <source>
    </source>
</evidence>
<evidence type="ECO:0000305" key="6"/>
<evidence type="ECO:0000305" key="7">
    <source>
    </source>
</evidence>
<gene>
    <name type="primary">GABRA1</name>
</gene>
<protein>
    <recommendedName>
        <fullName>Gamma-aminobutyric acid receptor subunit alpha-1</fullName>
    </recommendedName>
    <alternativeName>
        <fullName evidence="1">GABA(A) receptor subunit alpha-1</fullName>
        <shortName evidence="1">GABAAR subunit alpha-1</shortName>
    </alternativeName>
</protein>